<accession>O64816</accession>
<accession>Q6QJ31</accession>
<evidence type="ECO:0000250" key="1">
    <source>
        <dbReference type="UniProtKB" id="Q08467"/>
    </source>
</evidence>
<evidence type="ECO:0000255" key="2"/>
<evidence type="ECO:0000255" key="3">
    <source>
        <dbReference type="PROSITE-ProRule" id="PRU00159"/>
    </source>
</evidence>
<evidence type="ECO:0000255" key="4">
    <source>
        <dbReference type="PROSITE-ProRule" id="PRU10027"/>
    </source>
</evidence>
<evidence type="ECO:0000256" key="5">
    <source>
        <dbReference type="SAM" id="MobiDB-lite"/>
    </source>
</evidence>
<evidence type="ECO:0000269" key="6">
    <source>
    </source>
</evidence>
<evidence type="ECO:0000269" key="7">
    <source>
    </source>
</evidence>
<evidence type="ECO:0000269" key="8">
    <source>
    </source>
</evidence>
<evidence type="ECO:0000269" key="9">
    <source>
    </source>
</evidence>
<evidence type="ECO:0000269" key="10">
    <source>
    </source>
</evidence>
<evidence type="ECO:0000303" key="11">
    <source>
    </source>
</evidence>
<evidence type="ECO:0000303" key="12">
    <source>
    </source>
</evidence>
<evidence type="ECO:0000305" key="13"/>
<dbReference type="EC" id="2.7.11.1"/>
<dbReference type="EMBL" id="AC004401">
    <property type="protein sequence ID" value="AAC17823.1"/>
    <property type="molecule type" value="Genomic_DNA"/>
</dbReference>
<dbReference type="EMBL" id="CP002685">
    <property type="protein sequence ID" value="AEC07404.1"/>
    <property type="molecule type" value="Genomic_DNA"/>
</dbReference>
<dbReference type="EMBL" id="AY062631">
    <property type="protein sequence ID" value="AAL32709.1"/>
    <property type="molecule type" value="mRNA"/>
</dbReference>
<dbReference type="EMBL" id="AY081478">
    <property type="protein sequence ID" value="AAM10040.1"/>
    <property type="molecule type" value="mRNA"/>
</dbReference>
<dbReference type="EMBL" id="AY536852">
    <property type="protein sequence ID" value="AAS65790.1"/>
    <property type="molecule type" value="mRNA"/>
</dbReference>
<dbReference type="PIR" id="B84620">
    <property type="entry name" value="B84620"/>
</dbReference>
<dbReference type="RefSeq" id="NP_179889.1">
    <property type="nucleotide sequence ID" value="NM_127871.5"/>
</dbReference>
<dbReference type="SMR" id="O64816"/>
<dbReference type="BioGRID" id="2190">
    <property type="interactions" value="33"/>
</dbReference>
<dbReference type="FunCoup" id="O64816">
    <property type="interactions" value="4315"/>
</dbReference>
<dbReference type="IntAct" id="O64816">
    <property type="interactions" value="12"/>
</dbReference>
<dbReference type="MINT" id="O64816"/>
<dbReference type="STRING" id="3702.O64816"/>
<dbReference type="iPTMnet" id="O64816"/>
<dbReference type="PaxDb" id="3702-AT2G23070.1"/>
<dbReference type="ProteomicsDB" id="224535"/>
<dbReference type="EnsemblPlants" id="AT2G23070.1">
    <property type="protein sequence ID" value="AT2G23070.1"/>
    <property type="gene ID" value="AT2G23070"/>
</dbReference>
<dbReference type="GeneID" id="816837"/>
<dbReference type="Gramene" id="AT2G23070.1">
    <property type="protein sequence ID" value="AT2G23070.1"/>
    <property type="gene ID" value="AT2G23070"/>
</dbReference>
<dbReference type="KEGG" id="ath:AT2G23070"/>
<dbReference type="Araport" id="AT2G23070"/>
<dbReference type="TAIR" id="AT2G23070">
    <property type="gene designation" value="CKA4"/>
</dbReference>
<dbReference type="eggNOG" id="KOG0668">
    <property type="taxonomic scope" value="Eukaryota"/>
</dbReference>
<dbReference type="HOGENOM" id="CLU_000288_70_3_1"/>
<dbReference type="InParanoid" id="O64816"/>
<dbReference type="OMA" id="ACEKRPQ"/>
<dbReference type="PhylomeDB" id="O64816"/>
<dbReference type="BRENDA" id="2.7.11.1">
    <property type="organism ID" value="399"/>
</dbReference>
<dbReference type="CD-CODE" id="4299E36E">
    <property type="entry name" value="Nucleolus"/>
</dbReference>
<dbReference type="PRO" id="PR:O64816"/>
<dbReference type="Proteomes" id="UP000006548">
    <property type="component" value="Chromosome 2"/>
</dbReference>
<dbReference type="ExpressionAtlas" id="O64816">
    <property type="expression patterns" value="baseline and differential"/>
</dbReference>
<dbReference type="GO" id="GO:0009507">
    <property type="term" value="C:chloroplast"/>
    <property type="evidence" value="ECO:0000314"/>
    <property type="project" value="UniProtKB"/>
</dbReference>
<dbReference type="GO" id="GO:0005524">
    <property type="term" value="F:ATP binding"/>
    <property type="evidence" value="ECO:0007669"/>
    <property type="project" value="UniProtKB-KW"/>
</dbReference>
<dbReference type="GO" id="GO:0016301">
    <property type="term" value="F:kinase activity"/>
    <property type="evidence" value="ECO:0000314"/>
    <property type="project" value="UniProtKB"/>
</dbReference>
<dbReference type="GO" id="GO:0106310">
    <property type="term" value="F:protein serine kinase activity"/>
    <property type="evidence" value="ECO:0007669"/>
    <property type="project" value="RHEA"/>
</dbReference>
<dbReference type="GO" id="GO:0004674">
    <property type="term" value="F:protein serine/threonine kinase activity"/>
    <property type="evidence" value="ECO:0007669"/>
    <property type="project" value="UniProtKB-KW"/>
</dbReference>
<dbReference type="GO" id="GO:0071215">
    <property type="term" value="P:cellular response to abscisic acid stimulus"/>
    <property type="evidence" value="ECO:0000316"/>
    <property type="project" value="TAIR"/>
</dbReference>
<dbReference type="GO" id="GO:0010019">
    <property type="term" value="P:chloroplast-nucleus signaling pathway"/>
    <property type="evidence" value="ECO:0000315"/>
    <property type="project" value="UniProtKB"/>
</dbReference>
<dbReference type="GO" id="GO:0010187">
    <property type="term" value="P:negative regulation of seed germination"/>
    <property type="evidence" value="ECO:0000316"/>
    <property type="project" value="TAIR"/>
</dbReference>
<dbReference type="GO" id="GO:0040008">
    <property type="term" value="P:regulation of growth"/>
    <property type="evidence" value="ECO:0000315"/>
    <property type="project" value="UniProtKB"/>
</dbReference>
<dbReference type="GO" id="GO:2000028">
    <property type="term" value="P:regulation of photoperiodism, flowering"/>
    <property type="evidence" value="ECO:0000315"/>
    <property type="project" value="UniProtKB"/>
</dbReference>
<dbReference type="CDD" id="cd14132">
    <property type="entry name" value="STKc_CK2_alpha"/>
    <property type="match status" value="1"/>
</dbReference>
<dbReference type="FunFam" id="1.10.510.10:FF:000059">
    <property type="entry name" value="Casein kinase II subunit alpha"/>
    <property type="match status" value="1"/>
</dbReference>
<dbReference type="FunFam" id="3.30.200.20:FF:000088">
    <property type="entry name" value="Casein kinase II subunit alpha"/>
    <property type="match status" value="1"/>
</dbReference>
<dbReference type="Gene3D" id="3.30.200.20">
    <property type="entry name" value="Phosphorylase Kinase, domain 1"/>
    <property type="match status" value="2"/>
</dbReference>
<dbReference type="Gene3D" id="1.10.510.10">
    <property type="entry name" value="Transferase(Phosphotransferase) domain 1"/>
    <property type="match status" value="1"/>
</dbReference>
<dbReference type="InterPro" id="IPR045216">
    <property type="entry name" value="CK2_alpha"/>
</dbReference>
<dbReference type="InterPro" id="IPR011009">
    <property type="entry name" value="Kinase-like_dom_sf"/>
</dbReference>
<dbReference type="InterPro" id="IPR000719">
    <property type="entry name" value="Prot_kinase_dom"/>
</dbReference>
<dbReference type="InterPro" id="IPR017441">
    <property type="entry name" value="Protein_kinase_ATP_BS"/>
</dbReference>
<dbReference type="InterPro" id="IPR008271">
    <property type="entry name" value="Ser/Thr_kinase_AS"/>
</dbReference>
<dbReference type="PANTHER" id="PTHR24054">
    <property type="entry name" value="CASEIN KINASE II SUBUNIT ALPHA"/>
    <property type="match status" value="1"/>
</dbReference>
<dbReference type="PANTHER" id="PTHR24054:SF0">
    <property type="entry name" value="CASEIN KINASE II SUBUNIT ALPHA"/>
    <property type="match status" value="1"/>
</dbReference>
<dbReference type="Pfam" id="PF00069">
    <property type="entry name" value="Pkinase"/>
    <property type="match status" value="1"/>
</dbReference>
<dbReference type="SMART" id="SM00220">
    <property type="entry name" value="S_TKc"/>
    <property type="match status" value="1"/>
</dbReference>
<dbReference type="SUPFAM" id="SSF56112">
    <property type="entry name" value="Protein kinase-like (PK-like)"/>
    <property type="match status" value="1"/>
</dbReference>
<dbReference type="PROSITE" id="PS00107">
    <property type="entry name" value="PROTEIN_KINASE_ATP"/>
    <property type="match status" value="1"/>
</dbReference>
<dbReference type="PROSITE" id="PS50011">
    <property type="entry name" value="PROTEIN_KINASE_DOM"/>
    <property type="match status" value="1"/>
</dbReference>
<dbReference type="PROSITE" id="PS00108">
    <property type="entry name" value="PROTEIN_KINASE_ST"/>
    <property type="match status" value="1"/>
</dbReference>
<name>CSK2P_ARATH</name>
<organism>
    <name type="scientific">Arabidopsis thaliana</name>
    <name type="common">Mouse-ear cress</name>
    <dbReference type="NCBI Taxonomy" id="3702"/>
    <lineage>
        <taxon>Eukaryota</taxon>
        <taxon>Viridiplantae</taxon>
        <taxon>Streptophyta</taxon>
        <taxon>Embryophyta</taxon>
        <taxon>Tracheophyta</taxon>
        <taxon>Spermatophyta</taxon>
        <taxon>Magnoliopsida</taxon>
        <taxon>eudicotyledons</taxon>
        <taxon>Gunneridae</taxon>
        <taxon>Pentapetalae</taxon>
        <taxon>rosids</taxon>
        <taxon>malvids</taxon>
        <taxon>Brassicales</taxon>
        <taxon>Brassicaceae</taxon>
        <taxon>Camelineae</taxon>
        <taxon>Arabidopsis</taxon>
    </lineage>
</organism>
<reference key="1">
    <citation type="journal article" date="1999" name="Nature">
        <title>Sequence and analysis of chromosome 2 of the plant Arabidopsis thaliana.</title>
        <authorList>
            <person name="Lin X."/>
            <person name="Kaul S."/>
            <person name="Rounsley S.D."/>
            <person name="Shea T.P."/>
            <person name="Benito M.-I."/>
            <person name="Town C.D."/>
            <person name="Fujii C.Y."/>
            <person name="Mason T.M."/>
            <person name="Bowman C.L."/>
            <person name="Barnstead M.E."/>
            <person name="Feldblyum T.V."/>
            <person name="Buell C.R."/>
            <person name="Ketchum K.A."/>
            <person name="Lee J.J."/>
            <person name="Ronning C.M."/>
            <person name="Koo H.L."/>
            <person name="Moffat K.S."/>
            <person name="Cronin L.A."/>
            <person name="Shen M."/>
            <person name="Pai G."/>
            <person name="Van Aken S."/>
            <person name="Umayam L."/>
            <person name="Tallon L.J."/>
            <person name="Gill J.E."/>
            <person name="Adams M.D."/>
            <person name="Carrera A.J."/>
            <person name="Creasy T.H."/>
            <person name="Goodman H.M."/>
            <person name="Somerville C.R."/>
            <person name="Copenhaver G.P."/>
            <person name="Preuss D."/>
            <person name="Nierman W.C."/>
            <person name="White O."/>
            <person name="Eisen J.A."/>
            <person name="Salzberg S.L."/>
            <person name="Fraser C.M."/>
            <person name="Venter J.C."/>
        </authorList>
    </citation>
    <scope>NUCLEOTIDE SEQUENCE [LARGE SCALE GENOMIC DNA]</scope>
    <source>
        <strain>cv. Columbia</strain>
    </source>
</reference>
<reference key="2">
    <citation type="journal article" date="2017" name="Plant J.">
        <title>Araport11: a complete reannotation of the Arabidopsis thaliana reference genome.</title>
        <authorList>
            <person name="Cheng C.Y."/>
            <person name="Krishnakumar V."/>
            <person name="Chan A.P."/>
            <person name="Thibaud-Nissen F."/>
            <person name="Schobel S."/>
            <person name="Town C.D."/>
        </authorList>
    </citation>
    <scope>GENOME REANNOTATION</scope>
    <source>
        <strain>cv. Columbia</strain>
    </source>
</reference>
<reference key="3">
    <citation type="journal article" date="2003" name="Science">
        <title>Empirical analysis of transcriptional activity in the Arabidopsis genome.</title>
        <authorList>
            <person name="Yamada K."/>
            <person name="Lim J."/>
            <person name="Dale J.M."/>
            <person name="Chen H."/>
            <person name="Shinn P."/>
            <person name="Palm C.J."/>
            <person name="Southwick A.M."/>
            <person name="Wu H.C."/>
            <person name="Kim C.J."/>
            <person name="Nguyen M."/>
            <person name="Pham P.K."/>
            <person name="Cheuk R.F."/>
            <person name="Karlin-Newmann G."/>
            <person name="Liu S.X."/>
            <person name="Lam B."/>
            <person name="Sakano H."/>
            <person name="Wu T."/>
            <person name="Yu G."/>
            <person name="Miranda M."/>
            <person name="Quach H.L."/>
            <person name="Tripp M."/>
            <person name="Chang C.H."/>
            <person name="Lee J.M."/>
            <person name="Toriumi M.J."/>
            <person name="Chan M.M."/>
            <person name="Tang C.C."/>
            <person name="Onodera C.S."/>
            <person name="Deng J.M."/>
            <person name="Akiyama K."/>
            <person name="Ansari Y."/>
            <person name="Arakawa T."/>
            <person name="Banh J."/>
            <person name="Banno F."/>
            <person name="Bowser L."/>
            <person name="Brooks S.Y."/>
            <person name="Carninci P."/>
            <person name="Chao Q."/>
            <person name="Choy N."/>
            <person name="Enju A."/>
            <person name="Goldsmith A.D."/>
            <person name="Gurjal M."/>
            <person name="Hansen N.F."/>
            <person name="Hayashizaki Y."/>
            <person name="Johnson-Hopson C."/>
            <person name="Hsuan V.W."/>
            <person name="Iida K."/>
            <person name="Karnes M."/>
            <person name="Khan S."/>
            <person name="Koesema E."/>
            <person name="Ishida J."/>
            <person name="Jiang P.X."/>
            <person name="Jones T."/>
            <person name="Kawai J."/>
            <person name="Kamiya A."/>
            <person name="Meyers C."/>
            <person name="Nakajima M."/>
            <person name="Narusaka M."/>
            <person name="Seki M."/>
            <person name="Sakurai T."/>
            <person name="Satou M."/>
            <person name="Tamse R."/>
            <person name="Vaysberg M."/>
            <person name="Wallender E.K."/>
            <person name="Wong C."/>
            <person name="Yamamura Y."/>
            <person name="Yuan S."/>
            <person name="Shinozaki K."/>
            <person name="Davis R.W."/>
            <person name="Theologis A."/>
            <person name="Ecker J.R."/>
        </authorList>
    </citation>
    <scope>NUCLEOTIDE SEQUENCE [LARGE SCALE MRNA]</scope>
    <source>
        <strain>cv. Columbia</strain>
    </source>
</reference>
<reference key="4">
    <citation type="submission" date="2004-01" db="EMBL/GenBank/DDBJ databases">
        <title>Protein kinases in chloroplasts.</title>
        <authorList>
            <person name="Kurth J."/>
            <person name="Leister D."/>
        </authorList>
    </citation>
    <scope>NUCLEOTIDE SEQUENCE [MRNA] OF 200-425</scope>
    <source>
        <strain>cv. Columbia</strain>
        <tissue>Leaf</tissue>
    </source>
</reference>
<reference key="5">
    <citation type="journal article" date="2006" name="Plant Cell Physiol.">
        <title>An extensive survey of CK2 alpha and beta subunits in Arabidopsis: multiple isoforms exhibit differential subcellular localization.</title>
        <authorList>
            <person name="Salinas P."/>
            <person name="Fuentes D."/>
            <person name="Vidal E."/>
            <person name="Jordana X."/>
            <person name="Echeverria M."/>
            <person name="Holuigue L."/>
        </authorList>
    </citation>
    <scope>SUBCELLULAR LOCATION</scope>
</reference>
<reference key="6">
    <citation type="journal article" date="2014" name="J. Exp. Bot.">
        <title>Plastid casein kinase 2 knockout reduces abscisic acid (ABA) sensitivity, thermotolerance, and expression of ABA- and heat-stress-responsive nuclear genes.</title>
        <authorList>
            <person name="Wang Y."/>
            <person name="Chang H."/>
            <person name="Hu S."/>
            <person name="Lu X."/>
            <person name="Yuan C."/>
            <person name="Zhang C."/>
            <person name="Wang P."/>
            <person name="Xiao W."/>
            <person name="Xiao L."/>
            <person name="Xue G.P."/>
            <person name="Guo X."/>
        </authorList>
    </citation>
    <scope>FUNCTION</scope>
</reference>
<reference key="7">
    <citation type="journal article" date="2015" name="Plant Sci.">
        <title>Arabidopsis casein kinase 2 alpha4 subunit regulates various developmental pathways in a functionally overlapping manner.</title>
        <authorList>
            <person name="Mulekar J.J."/>
            <person name="Huq E."/>
        </authorList>
    </citation>
    <scope>FUNCTION</scope>
    <scope>SUBCELLULAR LOCATION</scope>
</reference>
<reference key="8">
    <citation type="journal article" date="2016" name="Front. Plant Sci.">
        <title>The plastid casein kinase 2 phosphorylates Rubisco activase at the Thr-78 Site but is not essential for regulation of Rubisco activation state.</title>
        <authorList>
            <person name="Kim S.Y."/>
            <person name="Bender K.W."/>
            <person name="Walker B.J."/>
            <person name="Zielinski R.E."/>
            <person name="Spalding M.H."/>
            <person name="Ort D.R."/>
            <person name="Huber S.C."/>
        </authorList>
    </citation>
    <scope>FUNCTION</scope>
</reference>
<reference key="9">
    <citation type="journal article" date="2016" name="Plant Cell Rep.">
        <title>A mutation of casein kinase 2 alpha4 subunit affects multiple developmental processes in Arabidopsis.</title>
        <authorList>
            <person name="Wang W.S."/>
            <person name="Zhu J."/>
            <person name="Zhang K.X."/>
            <person name="Lue Y.T."/>
            <person name="Xu H.H."/>
        </authorList>
    </citation>
    <scope>FUNCTION</scope>
    <scope>TISSUE SPECIFICITY</scope>
    <scope>DISRUPTION PHENOTYPE</scope>
</reference>
<protein>
    <recommendedName>
        <fullName evidence="13">Casein kinase II subunit alpha-4, chloroplastic</fullName>
        <shortName evidence="11">CK2-alpha4</shortName>
        <ecNumber>2.7.11.1</ecNumber>
    </recommendedName>
    <alternativeName>
        <fullName evidence="12">Plastid-targeted casein kinase 2 alpha</fullName>
        <shortName evidence="12">cpCK2alpha</shortName>
    </alternativeName>
</protein>
<proteinExistence type="evidence at transcript level"/>
<comment type="function">
    <text evidence="1 7 8 9 10">Casein kinases are operationally defined by their preferential utilization of acidic proteins such as caseins as substrates. The alpha chain contains the catalytic site (By similarity). Involved in the regulation of various developmental processes (PubMed:26025542). Involved in the regulation of plant growth and flowering time (PubMed:26883224). Involved in retrograde signaling in plant responses to abscisic acid (ABA) and heat stress. May act as an enhancing factor in abiotic stress signaling through modulation of the expression of some molecular players in retrograde signaling (PubMed:24803505). Phosphorylates RuBisCo activase (RCA) at Thr-78 (PubMed:27064346).</text>
</comment>
<comment type="catalytic activity">
    <reaction>
        <text>L-seryl-[protein] + ATP = O-phospho-L-seryl-[protein] + ADP + H(+)</text>
        <dbReference type="Rhea" id="RHEA:17989"/>
        <dbReference type="Rhea" id="RHEA-COMP:9863"/>
        <dbReference type="Rhea" id="RHEA-COMP:11604"/>
        <dbReference type="ChEBI" id="CHEBI:15378"/>
        <dbReference type="ChEBI" id="CHEBI:29999"/>
        <dbReference type="ChEBI" id="CHEBI:30616"/>
        <dbReference type="ChEBI" id="CHEBI:83421"/>
        <dbReference type="ChEBI" id="CHEBI:456216"/>
        <dbReference type="EC" id="2.7.11.1"/>
    </reaction>
</comment>
<comment type="catalytic activity">
    <reaction>
        <text>L-threonyl-[protein] + ATP = O-phospho-L-threonyl-[protein] + ADP + H(+)</text>
        <dbReference type="Rhea" id="RHEA:46608"/>
        <dbReference type="Rhea" id="RHEA-COMP:11060"/>
        <dbReference type="Rhea" id="RHEA-COMP:11605"/>
        <dbReference type="ChEBI" id="CHEBI:15378"/>
        <dbReference type="ChEBI" id="CHEBI:30013"/>
        <dbReference type="ChEBI" id="CHEBI:30616"/>
        <dbReference type="ChEBI" id="CHEBI:61977"/>
        <dbReference type="ChEBI" id="CHEBI:456216"/>
        <dbReference type="EC" id="2.7.11.1"/>
    </reaction>
</comment>
<comment type="subunit">
    <text evidence="13">Tetramer of two alpha and two beta chains.</text>
</comment>
<comment type="subcellular location">
    <subcellularLocation>
        <location evidence="6">Plastid</location>
        <location evidence="6">Chloroplast</location>
    </subcellularLocation>
</comment>
<comment type="tissue specificity">
    <text evidence="9">Expressed in root tips, lateral root primordia, cotyledons, leaf primordia, sepals, filaments, stigma, and anthers.</text>
</comment>
<comment type="disruption phenotype">
    <text evidence="9">Defects in root, hypocotyl, cotyledon and leaf development. Delayed flowering. Reduced growth, delayed flowering and hyperaccumulation of anthocyanins.</text>
</comment>
<comment type="similarity">
    <text evidence="3">Belongs to the protein kinase superfamily. Ser/Thr protein kinase family. CK2 subfamily.</text>
</comment>
<keyword id="KW-0067">ATP-binding</keyword>
<keyword id="KW-0150">Chloroplast</keyword>
<keyword id="KW-0418">Kinase</keyword>
<keyword id="KW-0547">Nucleotide-binding</keyword>
<keyword id="KW-0934">Plastid</keyword>
<keyword id="KW-1185">Reference proteome</keyword>
<keyword id="KW-0723">Serine/threonine-protein kinase</keyword>
<keyword id="KW-0808">Transferase</keyword>
<keyword id="KW-0809">Transit peptide</keyword>
<feature type="transit peptide" description="Chloroplast" evidence="2">
    <location>
        <begin position="1"/>
        <end position="55"/>
    </location>
</feature>
<feature type="chain" id="PRO_0000417493" description="Casein kinase II subunit alpha-4, chloroplastic">
    <location>
        <begin position="56"/>
        <end position="432"/>
    </location>
</feature>
<feature type="domain" description="Protein kinase" evidence="3">
    <location>
        <begin position="132"/>
        <end position="417"/>
    </location>
</feature>
<feature type="region of interest" description="Disordered" evidence="5">
    <location>
        <begin position="63"/>
        <end position="83"/>
    </location>
</feature>
<feature type="compositionally biased region" description="Low complexity" evidence="5">
    <location>
        <begin position="66"/>
        <end position="75"/>
    </location>
</feature>
<feature type="active site" description="Proton acceptor" evidence="3 4">
    <location>
        <position position="249"/>
    </location>
</feature>
<feature type="binding site" evidence="3">
    <location>
        <begin position="138"/>
        <end position="146"/>
    </location>
    <ligand>
        <name>ATP</name>
        <dbReference type="ChEBI" id="CHEBI:30616"/>
    </ligand>
</feature>
<feature type="binding site" evidence="3">
    <location>
        <position position="161"/>
    </location>
    <ligand>
        <name>ATP</name>
        <dbReference type="ChEBI" id="CHEBI:30616"/>
    </ligand>
</feature>
<sequence>MALRPCTGFTISSLRNASAANNNLFSLLSFSSSSPAKRNLLLSSLQDNLRRFASSASLYRQHLRNQQQQHQQQQQSRVKEKSETLAQKIGKSIRRAGAPSKARVYADVNVVRPKDYWDYESLAVQWGVQDDYEVVRKVGRGKYSEVFEGIHATDNEKCVIKILKPVKKKKIKREIKILQNLCGGPNIVKLLDIVRDQQSKTPSLIFEHVNNKDFKVLYPTLSDYDVRYYIFELLKALDFCHSRGIMHRDVKPHNVMIDHEQRKLRLIDWGLAEFYHPGKEYNVRVASRYFKGPELLVDLQDYDYSLDLWSLGCMFAGMIFRKEPFFYGHDNYDQLVKIAKVLGTDELNAYLNKYRIELDPNLTSLVGRHSRKPWTKFINSENQHLAVPEAVDFVDKLLRYDHQERPTAKEAMAHPYFYPIRNAESSRTPRSQ</sequence>
<gene>
    <name evidence="11" type="primary">CKA4</name>
    <name type="ordered locus">At2g23070</name>
    <name type="ORF">F21P24.13</name>
</gene>